<proteinExistence type="evidence at protein level"/>
<reference key="1">
    <citation type="journal article" date="2005" name="Plant Physiol.">
        <title>Novel CIPK1-associated proteins in Arabidopsis contain an evolutionarily conserved C-terminal region that mediates nuclear localization.</title>
        <authorList>
            <person name="Ok S.H."/>
            <person name="Jeong H.J."/>
            <person name="Bae J.M."/>
            <person name="Shin J.S."/>
            <person name="Luan S."/>
            <person name="Kim K.N."/>
        </authorList>
    </citation>
    <scope>NUCLEOTIDE SEQUENCE [MRNA] (ISOFORM 1)</scope>
    <scope>INTERACTION WITH CIPK1</scope>
    <scope>SUBCELLULAR LOCATION</scope>
    <scope>TISSUE SPECIFICITY</scope>
    <source>
        <strain>cv. Columbia</strain>
    </source>
</reference>
<reference key="2">
    <citation type="journal article" date="2000" name="Nature">
        <title>Sequence and analysis of chromosome 3 of the plant Arabidopsis thaliana.</title>
        <authorList>
            <person name="Salanoubat M."/>
            <person name="Lemcke K."/>
            <person name="Rieger M."/>
            <person name="Ansorge W."/>
            <person name="Unseld M."/>
            <person name="Fartmann B."/>
            <person name="Valle G."/>
            <person name="Bloecker H."/>
            <person name="Perez-Alonso M."/>
            <person name="Obermaier B."/>
            <person name="Delseny M."/>
            <person name="Boutry M."/>
            <person name="Grivell L.A."/>
            <person name="Mache R."/>
            <person name="Puigdomenech P."/>
            <person name="De Simone V."/>
            <person name="Choisne N."/>
            <person name="Artiguenave F."/>
            <person name="Robert C."/>
            <person name="Brottier P."/>
            <person name="Wincker P."/>
            <person name="Cattolico L."/>
            <person name="Weissenbach J."/>
            <person name="Saurin W."/>
            <person name="Quetier F."/>
            <person name="Schaefer M."/>
            <person name="Mueller-Auer S."/>
            <person name="Gabel C."/>
            <person name="Fuchs M."/>
            <person name="Benes V."/>
            <person name="Wurmbach E."/>
            <person name="Drzonek H."/>
            <person name="Erfle H."/>
            <person name="Jordan N."/>
            <person name="Bangert S."/>
            <person name="Wiedelmann R."/>
            <person name="Kranz H."/>
            <person name="Voss H."/>
            <person name="Holland R."/>
            <person name="Brandt P."/>
            <person name="Nyakatura G."/>
            <person name="Vezzi A."/>
            <person name="D'Angelo M."/>
            <person name="Pallavicini A."/>
            <person name="Toppo S."/>
            <person name="Simionati B."/>
            <person name="Conrad A."/>
            <person name="Hornischer K."/>
            <person name="Kauer G."/>
            <person name="Loehnert T.-H."/>
            <person name="Nordsiek G."/>
            <person name="Reichelt J."/>
            <person name="Scharfe M."/>
            <person name="Schoen O."/>
            <person name="Bargues M."/>
            <person name="Terol J."/>
            <person name="Climent J."/>
            <person name="Navarro P."/>
            <person name="Collado C."/>
            <person name="Perez-Perez A."/>
            <person name="Ottenwaelder B."/>
            <person name="Duchemin D."/>
            <person name="Cooke R."/>
            <person name="Laudie M."/>
            <person name="Berger-Llauro C."/>
            <person name="Purnelle B."/>
            <person name="Masuy D."/>
            <person name="de Haan M."/>
            <person name="Maarse A.C."/>
            <person name="Alcaraz J.-P."/>
            <person name="Cottet A."/>
            <person name="Casacuberta E."/>
            <person name="Monfort A."/>
            <person name="Argiriou A."/>
            <person name="Flores M."/>
            <person name="Liguori R."/>
            <person name="Vitale D."/>
            <person name="Mannhaupt G."/>
            <person name="Haase D."/>
            <person name="Schoof H."/>
            <person name="Rudd S."/>
            <person name="Zaccaria P."/>
            <person name="Mewes H.-W."/>
            <person name="Mayer K.F.X."/>
            <person name="Kaul S."/>
            <person name="Town C.D."/>
            <person name="Koo H.L."/>
            <person name="Tallon L.J."/>
            <person name="Jenkins J."/>
            <person name="Rooney T."/>
            <person name="Rizzo M."/>
            <person name="Walts A."/>
            <person name="Utterback T."/>
            <person name="Fujii C.Y."/>
            <person name="Shea T.P."/>
            <person name="Creasy T.H."/>
            <person name="Haas B."/>
            <person name="Maiti R."/>
            <person name="Wu D."/>
            <person name="Peterson J."/>
            <person name="Van Aken S."/>
            <person name="Pai G."/>
            <person name="Militscher J."/>
            <person name="Sellers P."/>
            <person name="Gill J.E."/>
            <person name="Feldblyum T.V."/>
            <person name="Preuss D."/>
            <person name="Lin X."/>
            <person name="Nierman W.C."/>
            <person name="Salzberg S.L."/>
            <person name="White O."/>
            <person name="Venter J.C."/>
            <person name="Fraser C.M."/>
            <person name="Kaneko T."/>
            <person name="Nakamura Y."/>
            <person name="Sato S."/>
            <person name="Kato T."/>
            <person name="Asamizu E."/>
            <person name="Sasamoto S."/>
            <person name="Kimura T."/>
            <person name="Idesawa K."/>
            <person name="Kawashima K."/>
            <person name="Kishida Y."/>
            <person name="Kiyokawa C."/>
            <person name="Kohara M."/>
            <person name="Matsumoto M."/>
            <person name="Matsuno A."/>
            <person name="Muraki A."/>
            <person name="Nakayama S."/>
            <person name="Nakazaki N."/>
            <person name="Shinpo S."/>
            <person name="Takeuchi C."/>
            <person name="Wada T."/>
            <person name="Watanabe A."/>
            <person name="Yamada M."/>
            <person name="Yasuda M."/>
            <person name="Tabata S."/>
        </authorList>
    </citation>
    <scope>NUCLEOTIDE SEQUENCE [LARGE SCALE GENOMIC DNA]</scope>
    <source>
        <strain>cv. Columbia</strain>
    </source>
</reference>
<reference key="3">
    <citation type="journal article" date="2017" name="Plant J.">
        <title>Araport11: a complete reannotation of the Arabidopsis thaliana reference genome.</title>
        <authorList>
            <person name="Cheng C.Y."/>
            <person name="Krishnakumar V."/>
            <person name="Chan A.P."/>
            <person name="Thibaud-Nissen F."/>
            <person name="Schobel S."/>
            <person name="Town C.D."/>
        </authorList>
    </citation>
    <scope>GENOME REANNOTATION</scope>
    <source>
        <strain>cv. Columbia</strain>
    </source>
</reference>
<reference key="4">
    <citation type="journal article" date="2003" name="Science">
        <title>Empirical analysis of transcriptional activity in the Arabidopsis genome.</title>
        <authorList>
            <person name="Yamada K."/>
            <person name="Lim J."/>
            <person name="Dale J.M."/>
            <person name="Chen H."/>
            <person name="Shinn P."/>
            <person name="Palm C.J."/>
            <person name="Southwick A.M."/>
            <person name="Wu H.C."/>
            <person name="Kim C.J."/>
            <person name="Nguyen M."/>
            <person name="Pham P.K."/>
            <person name="Cheuk R.F."/>
            <person name="Karlin-Newmann G."/>
            <person name="Liu S.X."/>
            <person name="Lam B."/>
            <person name="Sakano H."/>
            <person name="Wu T."/>
            <person name="Yu G."/>
            <person name="Miranda M."/>
            <person name="Quach H.L."/>
            <person name="Tripp M."/>
            <person name="Chang C.H."/>
            <person name="Lee J.M."/>
            <person name="Toriumi M.J."/>
            <person name="Chan M.M."/>
            <person name="Tang C.C."/>
            <person name="Onodera C.S."/>
            <person name="Deng J.M."/>
            <person name="Akiyama K."/>
            <person name="Ansari Y."/>
            <person name="Arakawa T."/>
            <person name="Banh J."/>
            <person name="Banno F."/>
            <person name="Bowser L."/>
            <person name="Brooks S.Y."/>
            <person name="Carninci P."/>
            <person name="Chao Q."/>
            <person name="Choy N."/>
            <person name="Enju A."/>
            <person name="Goldsmith A.D."/>
            <person name="Gurjal M."/>
            <person name="Hansen N.F."/>
            <person name="Hayashizaki Y."/>
            <person name="Johnson-Hopson C."/>
            <person name="Hsuan V.W."/>
            <person name="Iida K."/>
            <person name="Karnes M."/>
            <person name="Khan S."/>
            <person name="Koesema E."/>
            <person name="Ishida J."/>
            <person name="Jiang P.X."/>
            <person name="Jones T."/>
            <person name="Kawai J."/>
            <person name="Kamiya A."/>
            <person name="Meyers C."/>
            <person name="Nakajima M."/>
            <person name="Narusaka M."/>
            <person name="Seki M."/>
            <person name="Sakurai T."/>
            <person name="Satou M."/>
            <person name="Tamse R."/>
            <person name="Vaysberg M."/>
            <person name="Wallender E.K."/>
            <person name="Wong C."/>
            <person name="Yamamura Y."/>
            <person name="Yuan S."/>
            <person name="Shinozaki K."/>
            <person name="Davis R.W."/>
            <person name="Theologis A."/>
            <person name="Ecker J.R."/>
        </authorList>
    </citation>
    <scope>NUCLEOTIDE SEQUENCE [LARGE SCALE MRNA] (ISOFORM 2)</scope>
    <source>
        <strain>cv. Columbia</strain>
    </source>
</reference>
<reference key="5">
    <citation type="journal article" date="2009" name="DNA Res.">
        <title>Analysis of multiple occurrences of alternative splicing events in Arabidopsis thaliana using novel sequenced full-length cDNAs.</title>
        <authorList>
            <person name="Iida K."/>
            <person name="Fukami-Kobayashi K."/>
            <person name="Toyoda A."/>
            <person name="Sakaki Y."/>
            <person name="Kobayashi M."/>
            <person name="Seki M."/>
            <person name="Shinozaki K."/>
        </authorList>
    </citation>
    <scope>NUCLEOTIDE SEQUENCE [LARGE SCALE MRNA] (ISOFORM 1)</scope>
    <source>
        <strain>cv. Columbia</strain>
    </source>
</reference>
<gene>
    <name evidence="5" type="primary">ECT1</name>
    <name evidence="7" type="ordered locus">At3g03950</name>
    <name evidence="8" type="ORF">T11I18.6</name>
</gene>
<dbReference type="EMBL" id="AY894117">
    <property type="protein sequence ID" value="AAY44714.1"/>
    <property type="molecule type" value="mRNA"/>
</dbReference>
<dbReference type="EMBL" id="AC011698">
    <property type="protein sequence ID" value="AAF05854.1"/>
    <property type="status" value="ALT_SEQ"/>
    <property type="molecule type" value="Genomic_DNA"/>
</dbReference>
<dbReference type="EMBL" id="CP002686">
    <property type="protein sequence ID" value="AEE74016.1"/>
    <property type="molecule type" value="Genomic_DNA"/>
</dbReference>
<dbReference type="EMBL" id="CP002686">
    <property type="protein sequence ID" value="AEE74017.1"/>
    <property type="molecule type" value="Genomic_DNA"/>
</dbReference>
<dbReference type="EMBL" id="AF419591">
    <property type="protein sequence ID" value="AAL31923.1"/>
    <property type="molecule type" value="mRNA"/>
</dbReference>
<dbReference type="EMBL" id="AY097342">
    <property type="protein sequence ID" value="AAM19858.1"/>
    <property type="molecule type" value="mRNA"/>
</dbReference>
<dbReference type="EMBL" id="AK317103">
    <property type="protein sequence ID" value="BAH19792.1"/>
    <property type="molecule type" value="mRNA"/>
</dbReference>
<dbReference type="RefSeq" id="NP_001030629.1">
    <molecule id="Q3MK94-1"/>
    <property type="nucleotide sequence ID" value="NM_001035552.2"/>
</dbReference>
<dbReference type="RefSeq" id="NP_850510.1">
    <molecule id="Q3MK94-2"/>
    <property type="nucleotide sequence ID" value="NM_180179.3"/>
</dbReference>
<dbReference type="SMR" id="Q3MK94"/>
<dbReference type="FunCoup" id="Q3MK94">
    <property type="interactions" value="82"/>
</dbReference>
<dbReference type="IntAct" id="Q3MK94">
    <property type="interactions" value="4"/>
</dbReference>
<dbReference type="STRING" id="3702.Q3MK94"/>
<dbReference type="iPTMnet" id="Q3MK94"/>
<dbReference type="PaxDb" id="3702-AT3G03950.3"/>
<dbReference type="ProteomicsDB" id="222055">
    <molecule id="Q3MK94-1"/>
</dbReference>
<dbReference type="EnsemblPlants" id="AT3G03950.2">
    <molecule id="Q3MK94-2"/>
    <property type="protein sequence ID" value="AT3G03950.2"/>
    <property type="gene ID" value="AT3G03950"/>
</dbReference>
<dbReference type="EnsemblPlants" id="AT3G03950.3">
    <molecule id="Q3MK94-1"/>
    <property type="protein sequence ID" value="AT3G03950.3"/>
    <property type="gene ID" value="AT3G03950"/>
</dbReference>
<dbReference type="GeneID" id="819550"/>
<dbReference type="Gramene" id="AT3G03950.2">
    <molecule id="Q3MK94-2"/>
    <property type="protein sequence ID" value="AT3G03950.2"/>
    <property type="gene ID" value="AT3G03950"/>
</dbReference>
<dbReference type="Gramene" id="AT3G03950.3">
    <molecule id="Q3MK94-1"/>
    <property type="protein sequence ID" value="AT3G03950.3"/>
    <property type="gene ID" value="AT3G03950"/>
</dbReference>
<dbReference type="KEGG" id="ath:AT3G03950"/>
<dbReference type="Araport" id="AT3G03950"/>
<dbReference type="TAIR" id="AT3G03950">
    <property type="gene designation" value="ECT1"/>
</dbReference>
<dbReference type="eggNOG" id="KOG1901">
    <property type="taxonomic scope" value="Eukaryota"/>
</dbReference>
<dbReference type="InParanoid" id="Q3MK94"/>
<dbReference type="OMA" id="NFPETLV"/>
<dbReference type="PhylomeDB" id="Q3MK94"/>
<dbReference type="CD-CODE" id="24475C75">
    <property type="entry name" value="Stress granule"/>
</dbReference>
<dbReference type="CD-CODE" id="4299E36E">
    <property type="entry name" value="Nucleolus"/>
</dbReference>
<dbReference type="PRO" id="PR:Q3MK94"/>
<dbReference type="Proteomes" id="UP000006548">
    <property type="component" value="Chromosome 3"/>
</dbReference>
<dbReference type="ExpressionAtlas" id="Q3MK94">
    <property type="expression patterns" value="baseline and differential"/>
</dbReference>
<dbReference type="GO" id="GO:0005737">
    <property type="term" value="C:cytoplasm"/>
    <property type="evidence" value="ECO:0007669"/>
    <property type="project" value="UniProtKB-SubCell"/>
</dbReference>
<dbReference type="GO" id="GO:0005634">
    <property type="term" value="C:nucleus"/>
    <property type="evidence" value="ECO:0000314"/>
    <property type="project" value="TAIR"/>
</dbReference>
<dbReference type="GO" id="GO:0003729">
    <property type="term" value="F:mRNA binding"/>
    <property type="evidence" value="ECO:0000314"/>
    <property type="project" value="TAIR"/>
</dbReference>
<dbReference type="GO" id="GO:0019722">
    <property type="term" value="P:calcium-mediated signaling"/>
    <property type="evidence" value="ECO:0000304"/>
    <property type="project" value="TAIR"/>
</dbReference>
<dbReference type="CDD" id="cd21134">
    <property type="entry name" value="YTH"/>
    <property type="match status" value="1"/>
</dbReference>
<dbReference type="Gene3D" id="3.10.590.10">
    <property type="entry name" value="ph1033 like domains"/>
    <property type="match status" value="1"/>
</dbReference>
<dbReference type="InterPro" id="IPR007275">
    <property type="entry name" value="YTH_domain"/>
</dbReference>
<dbReference type="InterPro" id="IPR045168">
    <property type="entry name" value="YTH_prot"/>
</dbReference>
<dbReference type="PANTHER" id="PTHR12357:SF123">
    <property type="entry name" value="YTH DOMAIN-CONTAINING PROTEIN ECT1"/>
    <property type="match status" value="1"/>
</dbReference>
<dbReference type="PANTHER" id="PTHR12357">
    <property type="entry name" value="YTH YT521-B HOMOLOGY DOMAIN-CONTAINING"/>
    <property type="match status" value="1"/>
</dbReference>
<dbReference type="Pfam" id="PF04146">
    <property type="entry name" value="YTH"/>
    <property type="match status" value="1"/>
</dbReference>
<dbReference type="PROSITE" id="PS50882">
    <property type="entry name" value="YTH"/>
    <property type="match status" value="1"/>
</dbReference>
<sequence>MAGAASSDRLVTSFPLLDTADLFQDLSLGSDANEVPMNFTKGSFQHPYGHAPYGASSHGSERRPNMNAGNLLNGGDSIGSYPWGYIPANYPSGGYPDPRFGYDRNSNHSSFSHLMNPHSSQEVPSFDQLGYNDHLYSNHGLYGLYGNVIDSGHAYGTFGYDSWKLGRGWYPVDGYRKTRSFNHGRGYSDEKADRLNELCRGPRSSDFKNPQVLNSSMLDAMKQDVSAVDLQRYNGENFPESFVKAKFFVIKSYSEDDVHNCIKYGAWSSTPTGNKKLNAAYYEAKENSQECPVYLLFSVNASGQFVGLAEMVGPVDFNKTMEYWQQDKWIGCFPVKWHIIKDIPNSLLRHITLANNENKPVTNSRDTQEVNLEHGTKIIKIFKEYMSKTCILDDYKFYETRQKIIRDKKIKQKKQALDGASGETINLS</sequence>
<feature type="chain" id="PRO_0000445523" description="YTH domain-containing protein ECT1">
    <location>
        <begin position="1"/>
        <end position="428"/>
    </location>
</feature>
<feature type="domain" description="YTH" evidence="3">
    <location>
        <begin position="245"/>
        <end position="382"/>
    </location>
</feature>
<feature type="binding site" evidence="2">
    <location>
        <begin position="251"/>
        <end position="253"/>
    </location>
    <ligand>
        <name>RNA</name>
        <dbReference type="ChEBI" id="CHEBI:33697"/>
    </ligand>
    <ligandPart>
        <name>N(6)-methyladenosine 5'-phosphate residue</name>
        <dbReference type="ChEBI" id="CHEBI:74449"/>
    </ligandPart>
</feature>
<feature type="binding site" evidence="2">
    <location>
        <position position="257"/>
    </location>
    <ligand>
        <name>RNA</name>
        <dbReference type="ChEBI" id="CHEBI:33697"/>
    </ligand>
    <ligandPart>
        <name>N(6)-methyladenosine 5'-phosphate residue</name>
        <dbReference type="ChEBI" id="CHEBI:74449"/>
    </ligandPart>
</feature>
<feature type="binding site" evidence="2">
    <location>
        <begin position="267"/>
        <end position="268"/>
    </location>
    <ligand>
        <name>RNA</name>
        <dbReference type="ChEBI" id="CHEBI:33697"/>
    </ligand>
    <ligandPart>
        <name>N(6)-methyladenosine 5'-phosphate residue</name>
        <dbReference type="ChEBI" id="CHEBI:74449"/>
    </ligandPart>
</feature>
<feature type="binding site" evidence="2">
    <location>
        <position position="300"/>
    </location>
    <ligand>
        <name>RNA</name>
        <dbReference type="ChEBI" id="CHEBI:33697"/>
    </ligand>
    <ligandPart>
        <name>N(6)-methyladenosine 5'-phosphate residue</name>
        <dbReference type="ChEBI" id="CHEBI:74449"/>
    </ligandPart>
</feature>
<feature type="binding site" evidence="2">
    <location>
        <position position="324"/>
    </location>
    <ligand>
        <name>RNA</name>
        <dbReference type="ChEBI" id="CHEBI:33697"/>
    </ligand>
    <ligandPart>
        <name>N(6)-methyladenosine 5'-phosphate residue</name>
        <dbReference type="ChEBI" id="CHEBI:74449"/>
    </ligandPart>
</feature>
<feature type="binding site" evidence="2">
    <location>
        <position position="329"/>
    </location>
    <ligand>
        <name>RNA</name>
        <dbReference type="ChEBI" id="CHEBI:33697"/>
    </ligand>
    <ligandPart>
        <name>N(6)-methyladenosine 5'-phosphate residue</name>
        <dbReference type="ChEBI" id="CHEBI:74449"/>
    </ligandPart>
</feature>
<feature type="binding site" evidence="1">
    <location>
        <position position="337"/>
    </location>
    <ligand>
        <name>RNA</name>
        <dbReference type="ChEBI" id="CHEBI:33697"/>
    </ligand>
    <ligandPart>
        <name>N(6)-methyladenosine 5'-phosphate residue</name>
        <dbReference type="ChEBI" id="CHEBI:74449"/>
    </ligandPart>
</feature>
<feature type="splice variant" id="VSP_059896" description="In isoform 2.">
    <location>
        <begin position="42"/>
        <end position="45"/>
    </location>
</feature>
<organism>
    <name type="scientific">Arabidopsis thaliana</name>
    <name type="common">Mouse-ear cress</name>
    <dbReference type="NCBI Taxonomy" id="3702"/>
    <lineage>
        <taxon>Eukaryota</taxon>
        <taxon>Viridiplantae</taxon>
        <taxon>Streptophyta</taxon>
        <taxon>Embryophyta</taxon>
        <taxon>Tracheophyta</taxon>
        <taxon>Spermatophyta</taxon>
        <taxon>Magnoliopsida</taxon>
        <taxon>eudicotyledons</taxon>
        <taxon>Gunneridae</taxon>
        <taxon>Pentapetalae</taxon>
        <taxon>rosids</taxon>
        <taxon>malvids</taxon>
        <taxon>Brassicales</taxon>
        <taxon>Brassicaceae</taxon>
        <taxon>Camelineae</taxon>
        <taxon>Arabidopsis</taxon>
    </lineage>
</organism>
<accession>Q3MK94</accession>
<accession>Q8W573</accession>
<accession>Q9SQR7</accession>
<evidence type="ECO:0000250" key="1">
    <source>
        <dbReference type="UniProtKB" id="Q9LJE5"/>
    </source>
</evidence>
<evidence type="ECO:0000250" key="2">
    <source>
        <dbReference type="UniProtKB" id="Q9Y5A9"/>
    </source>
</evidence>
<evidence type="ECO:0000255" key="3">
    <source>
        <dbReference type="PROSITE-ProRule" id="PRU00225"/>
    </source>
</evidence>
<evidence type="ECO:0000269" key="4">
    <source>
    </source>
</evidence>
<evidence type="ECO:0000303" key="5">
    <source>
    </source>
</evidence>
<evidence type="ECO:0000305" key="6"/>
<evidence type="ECO:0000312" key="7">
    <source>
        <dbReference type="Araport" id="AT3G03950"/>
    </source>
</evidence>
<evidence type="ECO:0000312" key="8">
    <source>
        <dbReference type="EMBL" id="AAF05854.1"/>
    </source>
</evidence>
<comment type="function">
    <text evidence="1">Specifically recognizes and binds N6-methyladenosine (m6A)-containing RNAs, and regulates mRNA stability (By similarity). M6A is a modification present at internal sites of mRNAs and some non-coding RNAs and plays a role in mRNA stability and processing (By similarity).</text>
</comment>
<comment type="subunit">
    <text evidence="4">Interacts (via C-terminus) with CIPK1.</text>
</comment>
<comment type="interaction">
    <interactant intactId="EBI-2368594">
        <id>Q3MK94</id>
    </interactant>
    <interactant intactId="EBI-1748677">
        <id>Q8RWC9</id>
        <label>CIPK1</label>
    </interactant>
    <organismsDiffer>false</organismsDiffer>
    <experiments>4</experiments>
</comment>
<comment type="subcellular location">
    <subcellularLocation>
        <location evidence="4">Nucleus</location>
    </subcellularLocation>
    <subcellularLocation>
        <location evidence="4">Cytoplasm</location>
    </subcellularLocation>
    <text evidence="4">Localizes predominantly in the nucleus.</text>
</comment>
<comment type="alternative products">
    <event type="alternative splicing"/>
    <isoform>
        <id>Q3MK94-1</id>
        <name>1</name>
        <sequence type="displayed"/>
    </isoform>
    <isoform>
        <id>Q3MK94-2</id>
        <name>2</name>
        <sequence type="described" ref="VSP_059896"/>
    </isoform>
</comment>
<comment type="tissue specificity">
    <text evidence="4">Expressed in root apex, shoot apex, lateral root primordia, stamens, carpels and trichomes.</text>
</comment>
<comment type="sequence caution" evidence="6">
    <conflict type="erroneous gene model prediction">
        <sequence resource="EMBL-CDS" id="AAF05854"/>
    </conflict>
</comment>
<name>ECT1_ARATH</name>
<protein>
    <recommendedName>
        <fullName evidence="6">YTH domain-containing protein ECT1</fullName>
    </recommendedName>
    <alternativeName>
        <fullName evidence="5">Protein EVOLUTIONARILY CONSERVED C-TERMINAL REGION 1</fullName>
    </alternativeName>
</protein>
<keyword id="KW-0025">Alternative splicing</keyword>
<keyword id="KW-0963">Cytoplasm</keyword>
<keyword id="KW-0539">Nucleus</keyword>
<keyword id="KW-1185">Reference proteome</keyword>
<keyword id="KW-0694">RNA-binding</keyword>